<evidence type="ECO:0000255" key="1">
    <source>
        <dbReference type="HAMAP-Rule" id="MF_00235"/>
    </source>
</evidence>
<comment type="function">
    <text evidence="1">Catalyzes the reversible transfer of the terminal phosphate group between ATP and AMP. Plays an important role in cellular energy homeostasis and in adenine nucleotide metabolism.</text>
</comment>
<comment type="catalytic activity">
    <reaction evidence="1">
        <text>AMP + ATP = 2 ADP</text>
        <dbReference type="Rhea" id="RHEA:12973"/>
        <dbReference type="ChEBI" id="CHEBI:30616"/>
        <dbReference type="ChEBI" id="CHEBI:456215"/>
        <dbReference type="ChEBI" id="CHEBI:456216"/>
        <dbReference type="EC" id="2.7.4.3"/>
    </reaction>
</comment>
<comment type="pathway">
    <text evidence="1">Purine metabolism; AMP biosynthesis via salvage pathway; AMP from ADP: step 1/1.</text>
</comment>
<comment type="subunit">
    <text evidence="1">Monomer.</text>
</comment>
<comment type="subcellular location">
    <subcellularLocation>
        <location evidence="1">Cytoplasm</location>
    </subcellularLocation>
</comment>
<comment type="domain">
    <text evidence="1">Consists of three domains, a large central CORE domain and two small peripheral domains, NMPbind and LID, which undergo movements during catalysis. The LID domain closes over the site of phosphoryl transfer upon ATP binding. Assembling and dissambling the active center during each catalytic cycle provides an effective means to prevent ATP hydrolysis.</text>
</comment>
<comment type="similarity">
    <text evidence="1">Belongs to the adenylate kinase family.</text>
</comment>
<organism>
    <name type="scientific">Burkholderia ambifaria (strain ATCC BAA-244 / DSM 16087 / CCUG 44356 / LMG 19182 / AMMD)</name>
    <name type="common">Burkholderia cepacia (strain AMMD)</name>
    <dbReference type="NCBI Taxonomy" id="339670"/>
    <lineage>
        <taxon>Bacteria</taxon>
        <taxon>Pseudomonadati</taxon>
        <taxon>Pseudomonadota</taxon>
        <taxon>Betaproteobacteria</taxon>
        <taxon>Burkholderiales</taxon>
        <taxon>Burkholderiaceae</taxon>
        <taxon>Burkholderia</taxon>
        <taxon>Burkholderia cepacia complex</taxon>
    </lineage>
</organism>
<dbReference type="EC" id="2.7.4.3" evidence="1"/>
<dbReference type="EMBL" id="CP000440">
    <property type="protein sequence ID" value="ABI88152.1"/>
    <property type="molecule type" value="Genomic_DNA"/>
</dbReference>
<dbReference type="RefSeq" id="WP_006750937.1">
    <property type="nucleotide sequence ID" value="NZ_CP009798.1"/>
</dbReference>
<dbReference type="SMR" id="Q0BCH1"/>
<dbReference type="GeneID" id="93085202"/>
<dbReference type="KEGG" id="bam:Bamb_2596"/>
<dbReference type="PATRIC" id="fig|339670.21.peg.2306"/>
<dbReference type="eggNOG" id="COG0563">
    <property type="taxonomic scope" value="Bacteria"/>
</dbReference>
<dbReference type="UniPathway" id="UPA00588">
    <property type="reaction ID" value="UER00649"/>
</dbReference>
<dbReference type="Proteomes" id="UP000000662">
    <property type="component" value="Chromosome 1"/>
</dbReference>
<dbReference type="GO" id="GO:0005737">
    <property type="term" value="C:cytoplasm"/>
    <property type="evidence" value="ECO:0007669"/>
    <property type="project" value="UniProtKB-SubCell"/>
</dbReference>
<dbReference type="GO" id="GO:0004017">
    <property type="term" value="F:adenylate kinase activity"/>
    <property type="evidence" value="ECO:0007669"/>
    <property type="project" value="UniProtKB-UniRule"/>
</dbReference>
<dbReference type="GO" id="GO:0005524">
    <property type="term" value="F:ATP binding"/>
    <property type="evidence" value="ECO:0007669"/>
    <property type="project" value="UniProtKB-UniRule"/>
</dbReference>
<dbReference type="GO" id="GO:0044209">
    <property type="term" value="P:AMP salvage"/>
    <property type="evidence" value="ECO:0007669"/>
    <property type="project" value="UniProtKB-UniRule"/>
</dbReference>
<dbReference type="CDD" id="cd01428">
    <property type="entry name" value="ADK"/>
    <property type="match status" value="1"/>
</dbReference>
<dbReference type="FunFam" id="3.40.50.300:FF:000106">
    <property type="entry name" value="Adenylate kinase mitochondrial"/>
    <property type="match status" value="1"/>
</dbReference>
<dbReference type="Gene3D" id="3.40.50.300">
    <property type="entry name" value="P-loop containing nucleotide triphosphate hydrolases"/>
    <property type="match status" value="1"/>
</dbReference>
<dbReference type="HAMAP" id="MF_00235">
    <property type="entry name" value="Adenylate_kinase_Adk"/>
    <property type="match status" value="1"/>
</dbReference>
<dbReference type="InterPro" id="IPR006259">
    <property type="entry name" value="Adenyl_kin_sub"/>
</dbReference>
<dbReference type="InterPro" id="IPR000850">
    <property type="entry name" value="Adenylat/UMP-CMP_kin"/>
</dbReference>
<dbReference type="InterPro" id="IPR033690">
    <property type="entry name" value="Adenylat_kinase_CS"/>
</dbReference>
<dbReference type="InterPro" id="IPR007862">
    <property type="entry name" value="Adenylate_kinase_lid-dom"/>
</dbReference>
<dbReference type="InterPro" id="IPR027417">
    <property type="entry name" value="P-loop_NTPase"/>
</dbReference>
<dbReference type="NCBIfam" id="TIGR01351">
    <property type="entry name" value="adk"/>
    <property type="match status" value="1"/>
</dbReference>
<dbReference type="NCBIfam" id="NF001379">
    <property type="entry name" value="PRK00279.1-1"/>
    <property type="match status" value="1"/>
</dbReference>
<dbReference type="NCBIfam" id="NF001380">
    <property type="entry name" value="PRK00279.1-2"/>
    <property type="match status" value="1"/>
</dbReference>
<dbReference type="NCBIfam" id="NF001381">
    <property type="entry name" value="PRK00279.1-3"/>
    <property type="match status" value="1"/>
</dbReference>
<dbReference type="NCBIfam" id="NF011100">
    <property type="entry name" value="PRK14527.1"/>
    <property type="match status" value="1"/>
</dbReference>
<dbReference type="PANTHER" id="PTHR23359">
    <property type="entry name" value="NUCLEOTIDE KINASE"/>
    <property type="match status" value="1"/>
</dbReference>
<dbReference type="Pfam" id="PF00406">
    <property type="entry name" value="ADK"/>
    <property type="match status" value="1"/>
</dbReference>
<dbReference type="Pfam" id="PF05191">
    <property type="entry name" value="ADK_lid"/>
    <property type="match status" value="1"/>
</dbReference>
<dbReference type="PRINTS" id="PR00094">
    <property type="entry name" value="ADENYLTKNASE"/>
</dbReference>
<dbReference type="SUPFAM" id="SSF52540">
    <property type="entry name" value="P-loop containing nucleoside triphosphate hydrolases"/>
    <property type="match status" value="1"/>
</dbReference>
<dbReference type="PROSITE" id="PS00113">
    <property type="entry name" value="ADENYLATE_KINASE"/>
    <property type="match status" value="1"/>
</dbReference>
<gene>
    <name evidence="1" type="primary">adk</name>
    <name type="ordered locus">Bamb_2596</name>
</gene>
<protein>
    <recommendedName>
        <fullName evidence="1">Adenylate kinase</fullName>
        <shortName evidence="1">AK</shortName>
        <ecNumber evidence="1">2.7.4.3</ecNumber>
    </recommendedName>
    <alternativeName>
        <fullName evidence="1">ATP-AMP transphosphorylase</fullName>
    </alternativeName>
    <alternativeName>
        <fullName evidence="1">ATP:AMP phosphotransferase</fullName>
    </alternativeName>
    <alternativeName>
        <fullName evidence="1">Adenylate monophosphate kinase</fullName>
    </alternativeName>
</protein>
<reference key="1">
    <citation type="submission" date="2006-08" db="EMBL/GenBank/DDBJ databases">
        <title>Complete sequence of chromosome 1 of Burkholderia cepacia AMMD.</title>
        <authorList>
            <person name="Copeland A."/>
            <person name="Lucas S."/>
            <person name="Lapidus A."/>
            <person name="Barry K."/>
            <person name="Detter J.C."/>
            <person name="Glavina del Rio T."/>
            <person name="Hammon N."/>
            <person name="Israni S."/>
            <person name="Pitluck S."/>
            <person name="Bruce D."/>
            <person name="Chain P."/>
            <person name="Malfatti S."/>
            <person name="Shin M."/>
            <person name="Vergez L."/>
            <person name="Schmutz J."/>
            <person name="Larimer F."/>
            <person name="Land M."/>
            <person name="Hauser L."/>
            <person name="Kyrpides N."/>
            <person name="Kim E."/>
            <person name="Parke J."/>
            <person name="Coenye T."/>
            <person name="Konstantinidis K."/>
            <person name="Ramette A."/>
            <person name="Tiedje J."/>
            <person name="Richardson P."/>
        </authorList>
    </citation>
    <scope>NUCLEOTIDE SEQUENCE [LARGE SCALE GENOMIC DNA]</scope>
    <source>
        <strain>ATCC BAA-244 / DSM 16087 / CCUG 44356 / LMG 19182 / AMMD</strain>
    </source>
</reference>
<sequence>MRLILLGAPGAGKGTQANFIKEKFGIPQISTGDMLRAAVKAGSPLGVEAKGYMDAGKLVPDALIIGLVKERLKDADCANGYLFDGFPRTIAQADAMKDAGVAIDYVLEIDVPFSEIVERMSGRRTHPASGRTYHVKFNPPKVEGKDDVTGEPLIQRDDDKEETVKKRLEVYEAQTKPLITYYGDWAQRGEENGLKAPQYRKISGLGTVDEIRERAFDALK</sequence>
<keyword id="KW-0067">ATP-binding</keyword>
<keyword id="KW-0963">Cytoplasm</keyword>
<keyword id="KW-0418">Kinase</keyword>
<keyword id="KW-0545">Nucleotide biosynthesis</keyword>
<keyword id="KW-0547">Nucleotide-binding</keyword>
<keyword id="KW-0808">Transferase</keyword>
<accession>Q0BCH1</accession>
<name>KAD_BURCM</name>
<feature type="chain" id="PRO_1000058797" description="Adenylate kinase">
    <location>
        <begin position="1"/>
        <end position="220"/>
    </location>
</feature>
<feature type="region of interest" description="NMP" evidence="1">
    <location>
        <begin position="30"/>
        <end position="59"/>
    </location>
</feature>
<feature type="region of interest" description="LID" evidence="1">
    <location>
        <begin position="122"/>
        <end position="159"/>
    </location>
</feature>
<feature type="binding site" evidence="1">
    <location>
        <begin position="10"/>
        <end position="15"/>
    </location>
    <ligand>
        <name>ATP</name>
        <dbReference type="ChEBI" id="CHEBI:30616"/>
    </ligand>
</feature>
<feature type="binding site" evidence="1">
    <location>
        <position position="31"/>
    </location>
    <ligand>
        <name>AMP</name>
        <dbReference type="ChEBI" id="CHEBI:456215"/>
    </ligand>
</feature>
<feature type="binding site" evidence="1">
    <location>
        <position position="36"/>
    </location>
    <ligand>
        <name>AMP</name>
        <dbReference type="ChEBI" id="CHEBI:456215"/>
    </ligand>
</feature>
<feature type="binding site" evidence="1">
    <location>
        <begin position="57"/>
        <end position="59"/>
    </location>
    <ligand>
        <name>AMP</name>
        <dbReference type="ChEBI" id="CHEBI:456215"/>
    </ligand>
</feature>
<feature type="binding site" evidence="1">
    <location>
        <begin position="85"/>
        <end position="88"/>
    </location>
    <ligand>
        <name>AMP</name>
        <dbReference type="ChEBI" id="CHEBI:456215"/>
    </ligand>
</feature>
<feature type="binding site" evidence="1">
    <location>
        <position position="92"/>
    </location>
    <ligand>
        <name>AMP</name>
        <dbReference type="ChEBI" id="CHEBI:456215"/>
    </ligand>
</feature>
<feature type="binding site" evidence="1">
    <location>
        <position position="123"/>
    </location>
    <ligand>
        <name>ATP</name>
        <dbReference type="ChEBI" id="CHEBI:30616"/>
    </ligand>
</feature>
<feature type="binding site" evidence="1">
    <location>
        <begin position="132"/>
        <end position="133"/>
    </location>
    <ligand>
        <name>ATP</name>
        <dbReference type="ChEBI" id="CHEBI:30616"/>
    </ligand>
</feature>
<feature type="binding site" evidence="1">
    <location>
        <position position="156"/>
    </location>
    <ligand>
        <name>AMP</name>
        <dbReference type="ChEBI" id="CHEBI:456215"/>
    </ligand>
</feature>
<feature type="binding site" evidence="1">
    <location>
        <position position="167"/>
    </location>
    <ligand>
        <name>AMP</name>
        <dbReference type="ChEBI" id="CHEBI:456215"/>
    </ligand>
</feature>
<feature type="binding site" evidence="1">
    <location>
        <position position="206"/>
    </location>
    <ligand>
        <name>ATP</name>
        <dbReference type="ChEBI" id="CHEBI:30616"/>
    </ligand>
</feature>
<proteinExistence type="inferred from homology"/>